<proteinExistence type="inferred from homology"/>
<accession>A1V0R8</accession>
<reference key="1">
    <citation type="journal article" date="2010" name="Genome Biol. Evol.">
        <title>Continuing evolution of Burkholderia mallei through genome reduction and large-scale rearrangements.</title>
        <authorList>
            <person name="Losada L."/>
            <person name="Ronning C.M."/>
            <person name="DeShazer D."/>
            <person name="Woods D."/>
            <person name="Fedorova N."/>
            <person name="Kim H.S."/>
            <person name="Shabalina S.A."/>
            <person name="Pearson T.R."/>
            <person name="Brinkac L."/>
            <person name="Tan P."/>
            <person name="Nandi T."/>
            <person name="Crabtree J."/>
            <person name="Badger J."/>
            <person name="Beckstrom-Sternberg S."/>
            <person name="Saqib M."/>
            <person name="Schutzer S.E."/>
            <person name="Keim P."/>
            <person name="Nierman W.C."/>
        </authorList>
    </citation>
    <scope>NUCLEOTIDE SEQUENCE [LARGE SCALE GENOMIC DNA]</scope>
    <source>
        <strain>SAVP1</strain>
    </source>
</reference>
<feature type="chain" id="PRO_0000315077" description="UDP-N-acetylglucosamine--N-acetylmuramyl-(pentapeptide) pyrophosphoryl-undecaprenol N-acetylglucosamine transferase">
    <location>
        <begin position="1"/>
        <end position="367"/>
    </location>
</feature>
<feature type="binding site" evidence="1">
    <location>
        <begin position="15"/>
        <end position="17"/>
    </location>
    <ligand>
        <name>UDP-N-acetyl-alpha-D-glucosamine</name>
        <dbReference type="ChEBI" id="CHEBI:57705"/>
    </ligand>
</feature>
<feature type="binding site" evidence="1">
    <location>
        <position position="127"/>
    </location>
    <ligand>
        <name>UDP-N-acetyl-alpha-D-glucosamine</name>
        <dbReference type="ChEBI" id="CHEBI:57705"/>
    </ligand>
</feature>
<feature type="binding site" evidence="1">
    <location>
        <position position="163"/>
    </location>
    <ligand>
        <name>UDP-N-acetyl-alpha-D-glucosamine</name>
        <dbReference type="ChEBI" id="CHEBI:57705"/>
    </ligand>
</feature>
<feature type="binding site" evidence="1">
    <location>
        <position position="191"/>
    </location>
    <ligand>
        <name>UDP-N-acetyl-alpha-D-glucosamine</name>
        <dbReference type="ChEBI" id="CHEBI:57705"/>
    </ligand>
</feature>
<feature type="binding site" evidence="1">
    <location>
        <position position="249"/>
    </location>
    <ligand>
        <name>UDP-N-acetyl-alpha-D-glucosamine</name>
        <dbReference type="ChEBI" id="CHEBI:57705"/>
    </ligand>
</feature>
<feature type="binding site" evidence="1">
    <location>
        <position position="294"/>
    </location>
    <ligand>
        <name>UDP-N-acetyl-alpha-D-glucosamine</name>
        <dbReference type="ChEBI" id="CHEBI:57705"/>
    </ligand>
</feature>
<evidence type="ECO:0000255" key="1">
    <source>
        <dbReference type="HAMAP-Rule" id="MF_00033"/>
    </source>
</evidence>
<evidence type="ECO:0000305" key="2"/>
<organism>
    <name type="scientific">Burkholderia mallei (strain SAVP1)</name>
    <dbReference type="NCBI Taxonomy" id="320388"/>
    <lineage>
        <taxon>Bacteria</taxon>
        <taxon>Pseudomonadati</taxon>
        <taxon>Pseudomonadota</taxon>
        <taxon>Betaproteobacteria</taxon>
        <taxon>Burkholderiales</taxon>
        <taxon>Burkholderiaceae</taxon>
        <taxon>Burkholderia</taxon>
        <taxon>pseudomallei group</taxon>
    </lineage>
</organism>
<comment type="function">
    <text evidence="1">Cell wall formation. Catalyzes the transfer of a GlcNAc subunit on undecaprenyl-pyrophosphoryl-MurNAc-pentapeptide (lipid intermediate I) to form undecaprenyl-pyrophosphoryl-MurNAc-(pentapeptide)GlcNAc (lipid intermediate II).</text>
</comment>
<comment type="catalytic activity">
    <reaction evidence="1">
        <text>di-trans,octa-cis-undecaprenyl diphospho-N-acetyl-alpha-D-muramoyl-L-alanyl-D-glutamyl-meso-2,6-diaminopimeloyl-D-alanyl-D-alanine + UDP-N-acetyl-alpha-D-glucosamine = di-trans,octa-cis-undecaprenyl diphospho-[N-acetyl-alpha-D-glucosaminyl-(1-&gt;4)]-N-acetyl-alpha-D-muramoyl-L-alanyl-D-glutamyl-meso-2,6-diaminopimeloyl-D-alanyl-D-alanine + UDP + H(+)</text>
        <dbReference type="Rhea" id="RHEA:31227"/>
        <dbReference type="ChEBI" id="CHEBI:15378"/>
        <dbReference type="ChEBI" id="CHEBI:57705"/>
        <dbReference type="ChEBI" id="CHEBI:58223"/>
        <dbReference type="ChEBI" id="CHEBI:61387"/>
        <dbReference type="ChEBI" id="CHEBI:61388"/>
        <dbReference type="EC" id="2.4.1.227"/>
    </reaction>
</comment>
<comment type="pathway">
    <text evidence="1">Cell wall biogenesis; peptidoglycan biosynthesis.</text>
</comment>
<comment type="subcellular location">
    <subcellularLocation>
        <location evidence="1">Cell inner membrane</location>
        <topology evidence="1">Peripheral membrane protein</topology>
        <orientation evidence="1">Cytoplasmic side</orientation>
    </subcellularLocation>
</comment>
<comment type="similarity">
    <text evidence="1">Belongs to the glycosyltransferase 28 family. MurG subfamily.</text>
</comment>
<comment type="sequence caution" evidence="2">
    <conflict type="erroneous initiation">
        <sequence resource="EMBL-CDS" id="ABM52051"/>
    </conflict>
</comment>
<sequence length="367" mass="38738">MTSTQRTLMVMAGGTGGHVFPGLAVAHRMQAQGWRVVWLGNPAGMEATLVPRHGIPMEYVRFGGLRGKGLATKFALPFNLLRACAQSLRALRRVKPDVVLGMGGYITFPAGLVTVLTGRPLVLHEQNSIAGLTNKVLAKLAKRVLVAFPGALPNAEWTGNPIRTELARTEPPQARYAARSGKLRLLVVGGSLGAAALNEVVPRALALLAPDERPQVVHQAGAKHIDTLKENYEAAGLSCGSDVALVPFIDDMASAYANADLVICRSGAMTVAEIAAVGVAALFVPFPHAVDDHQTTNAEFLAEQGAAVLVQQRDLSAELLADWLRGQSRDSLAAMAERSRSLAKPDATDEVARVCAAVAGANLEGKQ</sequence>
<name>MURG_BURMS</name>
<gene>
    <name evidence="1" type="primary">murG</name>
    <name type="ordered locus">BMASAVP1_A0472</name>
</gene>
<keyword id="KW-0131">Cell cycle</keyword>
<keyword id="KW-0132">Cell division</keyword>
<keyword id="KW-0997">Cell inner membrane</keyword>
<keyword id="KW-1003">Cell membrane</keyword>
<keyword id="KW-0133">Cell shape</keyword>
<keyword id="KW-0961">Cell wall biogenesis/degradation</keyword>
<keyword id="KW-0328">Glycosyltransferase</keyword>
<keyword id="KW-0472">Membrane</keyword>
<keyword id="KW-0573">Peptidoglycan synthesis</keyword>
<keyword id="KW-0808">Transferase</keyword>
<protein>
    <recommendedName>
        <fullName evidence="1">UDP-N-acetylglucosamine--N-acetylmuramyl-(pentapeptide) pyrophosphoryl-undecaprenol N-acetylglucosamine transferase</fullName>
        <ecNumber evidence="1">2.4.1.227</ecNumber>
    </recommendedName>
    <alternativeName>
        <fullName evidence="1">Undecaprenyl-PP-MurNAc-pentapeptide-UDPGlcNAc GlcNAc transferase</fullName>
    </alternativeName>
</protein>
<dbReference type="EC" id="2.4.1.227" evidence="1"/>
<dbReference type="EMBL" id="CP000526">
    <property type="protein sequence ID" value="ABM52051.1"/>
    <property type="status" value="ALT_INIT"/>
    <property type="molecule type" value="Genomic_DNA"/>
</dbReference>
<dbReference type="RefSeq" id="WP_004194182.1">
    <property type="nucleotide sequence ID" value="NC_008785.1"/>
</dbReference>
<dbReference type="SMR" id="A1V0R8"/>
<dbReference type="CAZy" id="GT28">
    <property type="family name" value="Glycosyltransferase Family 28"/>
</dbReference>
<dbReference type="GeneID" id="93061627"/>
<dbReference type="KEGG" id="bmv:BMASAVP1_A0472"/>
<dbReference type="HOGENOM" id="CLU_037404_2_0_4"/>
<dbReference type="UniPathway" id="UPA00219"/>
<dbReference type="GO" id="GO:0005886">
    <property type="term" value="C:plasma membrane"/>
    <property type="evidence" value="ECO:0007669"/>
    <property type="project" value="UniProtKB-SubCell"/>
</dbReference>
<dbReference type="GO" id="GO:0051991">
    <property type="term" value="F:UDP-N-acetyl-D-glucosamine:N-acetylmuramoyl-L-alanyl-D-glutamyl-meso-2,6-diaminopimelyl-D-alanyl-D-alanine-diphosphoundecaprenol 4-beta-N-acetylglucosaminlytransferase activity"/>
    <property type="evidence" value="ECO:0007669"/>
    <property type="project" value="RHEA"/>
</dbReference>
<dbReference type="GO" id="GO:0050511">
    <property type="term" value="F:undecaprenyldiphospho-muramoylpentapeptide beta-N-acetylglucosaminyltransferase activity"/>
    <property type="evidence" value="ECO:0007669"/>
    <property type="project" value="UniProtKB-UniRule"/>
</dbReference>
<dbReference type="GO" id="GO:0005975">
    <property type="term" value="P:carbohydrate metabolic process"/>
    <property type="evidence" value="ECO:0007669"/>
    <property type="project" value="InterPro"/>
</dbReference>
<dbReference type="GO" id="GO:0051301">
    <property type="term" value="P:cell division"/>
    <property type="evidence" value="ECO:0007669"/>
    <property type="project" value="UniProtKB-KW"/>
</dbReference>
<dbReference type="GO" id="GO:0071555">
    <property type="term" value="P:cell wall organization"/>
    <property type="evidence" value="ECO:0007669"/>
    <property type="project" value="UniProtKB-KW"/>
</dbReference>
<dbReference type="GO" id="GO:0030259">
    <property type="term" value="P:lipid glycosylation"/>
    <property type="evidence" value="ECO:0007669"/>
    <property type="project" value="UniProtKB-UniRule"/>
</dbReference>
<dbReference type="GO" id="GO:0009252">
    <property type="term" value="P:peptidoglycan biosynthetic process"/>
    <property type="evidence" value="ECO:0007669"/>
    <property type="project" value="UniProtKB-UniRule"/>
</dbReference>
<dbReference type="GO" id="GO:0008360">
    <property type="term" value="P:regulation of cell shape"/>
    <property type="evidence" value="ECO:0007669"/>
    <property type="project" value="UniProtKB-KW"/>
</dbReference>
<dbReference type="CDD" id="cd03785">
    <property type="entry name" value="GT28_MurG"/>
    <property type="match status" value="1"/>
</dbReference>
<dbReference type="Gene3D" id="3.40.50.2000">
    <property type="entry name" value="Glycogen Phosphorylase B"/>
    <property type="match status" value="2"/>
</dbReference>
<dbReference type="HAMAP" id="MF_00033">
    <property type="entry name" value="MurG"/>
    <property type="match status" value="1"/>
</dbReference>
<dbReference type="InterPro" id="IPR006009">
    <property type="entry name" value="GlcNAc_MurG"/>
</dbReference>
<dbReference type="InterPro" id="IPR007235">
    <property type="entry name" value="Glyco_trans_28_C"/>
</dbReference>
<dbReference type="InterPro" id="IPR004276">
    <property type="entry name" value="GlycoTrans_28_N"/>
</dbReference>
<dbReference type="NCBIfam" id="TIGR01133">
    <property type="entry name" value="murG"/>
    <property type="match status" value="1"/>
</dbReference>
<dbReference type="PANTHER" id="PTHR21015:SF22">
    <property type="entry name" value="GLYCOSYLTRANSFERASE"/>
    <property type="match status" value="1"/>
</dbReference>
<dbReference type="PANTHER" id="PTHR21015">
    <property type="entry name" value="UDP-N-ACETYLGLUCOSAMINE--N-ACETYLMURAMYL-(PENTAPEPTIDE) PYROPHOSPHORYL-UNDECAPRENOL N-ACETYLGLUCOSAMINE TRANSFERASE 1"/>
    <property type="match status" value="1"/>
</dbReference>
<dbReference type="Pfam" id="PF04101">
    <property type="entry name" value="Glyco_tran_28_C"/>
    <property type="match status" value="1"/>
</dbReference>
<dbReference type="Pfam" id="PF03033">
    <property type="entry name" value="Glyco_transf_28"/>
    <property type="match status" value="1"/>
</dbReference>
<dbReference type="SUPFAM" id="SSF53756">
    <property type="entry name" value="UDP-Glycosyltransferase/glycogen phosphorylase"/>
    <property type="match status" value="1"/>
</dbReference>